<sequence>MSITTTMTSVPIFESVSRFLPPGNEDEQFWWKITGRHMARMMHEAGYPEDRQVECLLFHRFKVVPCLGPRPHSDTPWYKSRVGGGAADGCPINYSWRFGTSDRRPHNRNFIEPLGALTNTSADPLNEVATKALLHDYSMTLPNVDLEAFWTFAPHYRPRIIEKADMEKLAGASLLVGAEMSPDSRTIDIKAYMYPRVPSQTSQLLTTILPQAMRDAYGEDVCLDSLNFVHDFMTKDPQGCQLVLTGTTGIDCCKLQDTRVKIYVITRNTSFDHIAAIMTLGGRRPISEELLGQLKALWYELKGAPAELPSSEQLPVQTKPDRSKNPIVVPFYFDIQPRLELPDVKAYIDVSTSPVSDLAAANAVVCHLEQHGSGQNPKAYLNVLKDITPVEALETQKGALAFYSVAVKKNELDITSYFNPQVYKRYFAHEVQLNGQRRSVFE</sequence>
<proteinExistence type="inferred from homology"/>
<comment type="function">
    <text evidence="1 2 3">Prenyltransferase; part of the gene cluster that mediates the biosynthesis of neosartoricin B, a prenylated anthracenone that probably exhibits T-cell antiproliferative activity, suggestive of a physiological role as an immunosuppressive agent (PubMed:23758576). The non-reducing polyketide synthase nscA probably synthesizes and cyclizes the decaketide backbone (By similarity). The hydrolase nscB then mediates the product release through hydrolysis followed by spontaneous decarboxylation (By similarity). The prenyltransferase nscD catalyzes the addition of the dimethylallyl group to the aromatic C5 (By similarity). The FAD-dependent monooxygenase nscC is then responsible for the stereospecific hydroxylation at C2 (By similarity). Neosartoricin B can be converted into two additional compounds neosartoricins C and D (By similarity). Neosartoricin C is a spirocyclic compound that is cyclized through the attack of C3 hydroxyl on C14, followed by dehydration (By similarity). On the other hand, neosartoricin D is a further cyclized compound in which attack of C2 on C14 in neosartoricin C results in the formation of the acetal-containing dioxabicyclo-octanone ring (By similarity). Both of these compounds are novel and possibly represent related metabolites of the gene cluster (By similarity).</text>
</comment>
<comment type="pathway">
    <text evidence="6">Secondary metabolite biosynthesis.</text>
</comment>
<comment type="similarity">
    <text evidence="5">Belongs to the tryptophan dimethylallyltransferase family.</text>
</comment>
<accession>D4CZZ3</accession>
<organism>
    <name type="scientific">Trichophyton verrucosum (strain HKI 0517)</name>
    <dbReference type="NCBI Taxonomy" id="663202"/>
    <lineage>
        <taxon>Eukaryota</taxon>
        <taxon>Fungi</taxon>
        <taxon>Dikarya</taxon>
        <taxon>Ascomycota</taxon>
        <taxon>Pezizomycotina</taxon>
        <taxon>Eurotiomycetes</taxon>
        <taxon>Eurotiomycetidae</taxon>
        <taxon>Onygenales</taxon>
        <taxon>Arthrodermataceae</taxon>
        <taxon>Trichophyton</taxon>
    </lineage>
</organism>
<name>NSCD_TRIVH</name>
<evidence type="ECO:0000250" key="1">
    <source>
        <dbReference type="UniProtKB" id="A1D8I8"/>
    </source>
</evidence>
<evidence type="ECO:0000250" key="2">
    <source>
        <dbReference type="UniProtKB" id="F2S700"/>
    </source>
</evidence>
<evidence type="ECO:0000269" key="3">
    <source>
    </source>
</evidence>
<evidence type="ECO:0000303" key="4">
    <source>
    </source>
</evidence>
<evidence type="ECO:0000305" key="5"/>
<evidence type="ECO:0000305" key="6">
    <source>
    </source>
</evidence>
<gene>
    <name evidence="4" type="primary">nscD</name>
    <name type="ORF">TRV_00387</name>
</gene>
<dbReference type="EC" id="2.5.1.-" evidence="6"/>
<dbReference type="EMBL" id="ACYE01000020">
    <property type="protein sequence ID" value="EFE44836.1"/>
    <property type="molecule type" value="Genomic_DNA"/>
</dbReference>
<dbReference type="RefSeq" id="XP_003025447.1">
    <property type="nucleotide sequence ID" value="XM_003025401.1"/>
</dbReference>
<dbReference type="SMR" id="D4CZZ3"/>
<dbReference type="GeneID" id="9581673"/>
<dbReference type="KEGG" id="tve:TRV_00387"/>
<dbReference type="HOGENOM" id="CLU_037431_2_2_1"/>
<dbReference type="OrthoDB" id="472at34384"/>
<dbReference type="Proteomes" id="UP000008383">
    <property type="component" value="Unassembled WGS sequence"/>
</dbReference>
<dbReference type="GO" id="GO:0004659">
    <property type="term" value="F:prenyltransferase activity"/>
    <property type="evidence" value="ECO:0007669"/>
    <property type="project" value="TreeGrafter"/>
</dbReference>
<dbReference type="GO" id="GO:0009820">
    <property type="term" value="P:alkaloid metabolic process"/>
    <property type="evidence" value="ECO:0007669"/>
    <property type="project" value="InterPro"/>
</dbReference>
<dbReference type="CDD" id="cd13929">
    <property type="entry name" value="PT-DMATS_CymD"/>
    <property type="match status" value="1"/>
</dbReference>
<dbReference type="InterPro" id="IPR033964">
    <property type="entry name" value="Aro_prenylTrfase"/>
</dbReference>
<dbReference type="InterPro" id="IPR017795">
    <property type="entry name" value="Aro_prenylTrfase_DMATS"/>
</dbReference>
<dbReference type="NCBIfam" id="TIGR03429">
    <property type="entry name" value="arom_pren_DMATS"/>
    <property type="match status" value="1"/>
</dbReference>
<dbReference type="PANTHER" id="PTHR40627">
    <property type="entry name" value="INDOLE PRENYLTRANSFERASE TDIB-RELATED"/>
    <property type="match status" value="1"/>
</dbReference>
<dbReference type="PANTHER" id="PTHR40627:SF4">
    <property type="entry name" value="PRENYLTRANSFERASE ASQH1-RELATED"/>
    <property type="match status" value="1"/>
</dbReference>
<dbReference type="Pfam" id="PF11991">
    <property type="entry name" value="Trp_DMAT"/>
    <property type="match status" value="1"/>
</dbReference>
<dbReference type="SFLD" id="SFLDS00036">
    <property type="entry name" value="Aromatic_Prenyltransferase"/>
    <property type="match status" value="1"/>
</dbReference>
<protein>
    <recommendedName>
        <fullName evidence="4">Prenyltransferase nscD</fullName>
        <ecNumber evidence="6">2.5.1.-</ecNumber>
    </recommendedName>
    <alternativeName>
        <fullName evidence="4">Neosartoricin B biosynthesis protein D</fullName>
    </alternativeName>
</protein>
<reference key="1">
    <citation type="journal article" date="2011" name="Genome Biol.">
        <title>Comparative and functional genomics provide insights into the pathogenicity of dermatophytic fungi.</title>
        <authorList>
            <person name="Burmester A."/>
            <person name="Shelest E."/>
            <person name="Gloeckner G."/>
            <person name="Heddergott C."/>
            <person name="Schindler S."/>
            <person name="Staib P."/>
            <person name="Heidel A."/>
            <person name="Felder M."/>
            <person name="Petzold A."/>
            <person name="Szafranski K."/>
            <person name="Feuermann M."/>
            <person name="Pedruzzi I."/>
            <person name="Priebe S."/>
            <person name="Groth M."/>
            <person name="Winkler R."/>
            <person name="Li W."/>
            <person name="Kniemeyer O."/>
            <person name="Schroeckh V."/>
            <person name="Hertweck C."/>
            <person name="Hube B."/>
            <person name="White T.C."/>
            <person name="Platzer M."/>
            <person name="Guthke R."/>
            <person name="Heitman J."/>
            <person name="Woestemeyer J."/>
            <person name="Zipfel P.F."/>
            <person name="Monod M."/>
            <person name="Brakhage A.A."/>
        </authorList>
    </citation>
    <scope>NUCLEOTIDE SEQUENCE [LARGE SCALE GENOMIC DNA]</scope>
    <source>
        <strain>HKI 0517</strain>
    </source>
</reference>
<reference key="2">
    <citation type="journal article" date="2013" name="ACS Synth. Biol.">
        <title>Discovery of cryptic polyketide metabolites from dermatophytes using heterologous expression in Aspergillus nidulans.</title>
        <authorList>
            <person name="Yin W.B."/>
            <person name="Chooi Y.H."/>
            <person name="Smith A.R."/>
            <person name="Cacho R.A."/>
            <person name="Hu Y."/>
            <person name="White T.C."/>
            <person name="Tang Y."/>
        </authorList>
    </citation>
    <scope>FUNCTION</scope>
</reference>
<feature type="chain" id="PRO_0000437920" description="Prenyltransferase nscD">
    <location>
        <begin position="1"/>
        <end position="442"/>
    </location>
</feature>
<keyword id="KW-0808">Transferase</keyword>